<dbReference type="EC" id="3.4.23.-"/>
<dbReference type="EMBL" id="X99267">
    <property type="protein sequence ID" value="CAA67663.1"/>
    <property type="molecule type" value="mRNA"/>
</dbReference>
<dbReference type="EMBL" id="D83700">
    <property type="protein sequence ID" value="BAA22832.1"/>
    <property type="molecule type" value="mRNA"/>
</dbReference>
<dbReference type="EMBL" id="AB004454">
    <property type="protein sequence ID" value="BAA20406.1"/>
    <property type="molecule type" value="mRNA"/>
</dbReference>
<dbReference type="EMBL" id="BC078805">
    <property type="protein sequence ID" value="AAH78805.1"/>
    <property type="molecule type" value="mRNA"/>
</dbReference>
<dbReference type="RefSeq" id="NP_112349.2">
    <property type="nucleotide sequence ID" value="NM_031087.2"/>
</dbReference>
<dbReference type="RefSeq" id="XP_006250467.1">
    <property type="nucleotide sequence ID" value="XM_006250405.5"/>
</dbReference>
<dbReference type="RefSeq" id="XP_006250469.1">
    <property type="nucleotide sequence ID" value="XM_006250407.5"/>
</dbReference>
<dbReference type="RefSeq" id="XP_006250470.1">
    <property type="nucleotide sequence ID" value="XM_006250408.4"/>
</dbReference>
<dbReference type="RefSeq" id="XP_008768099.1">
    <property type="nucleotide sequence ID" value="XM_008769877.4"/>
</dbReference>
<dbReference type="RefSeq" id="XP_017454428.1">
    <property type="nucleotide sequence ID" value="XM_017598939.1"/>
</dbReference>
<dbReference type="RefSeq" id="XP_038947041.1">
    <property type="nucleotide sequence ID" value="XM_039091113.2"/>
</dbReference>
<dbReference type="RefSeq" id="XP_063128701.1">
    <property type="nucleotide sequence ID" value="XM_063272631.1"/>
</dbReference>
<dbReference type="RefSeq" id="XP_063128702.1">
    <property type="nucleotide sequence ID" value="XM_063272632.1"/>
</dbReference>
<dbReference type="RefSeq" id="XP_063128703.1">
    <property type="nucleotide sequence ID" value="XM_063272633.1"/>
</dbReference>
<dbReference type="SMR" id="O88777"/>
<dbReference type="FunCoup" id="O88777">
    <property type="interactions" value="468"/>
</dbReference>
<dbReference type="STRING" id="10116.ENSRNOP00000070964"/>
<dbReference type="MEROPS" id="A22.002"/>
<dbReference type="iPTMnet" id="O88777"/>
<dbReference type="PhosphoSitePlus" id="O88777"/>
<dbReference type="SwissPalm" id="O88777"/>
<dbReference type="PaxDb" id="10116-ENSRNOP00000049605"/>
<dbReference type="Ensembl" id="ENSRNOT00000040203.5">
    <property type="protein sequence ID" value="ENSRNOP00000049605.3"/>
    <property type="gene ID" value="ENSRNOG00000002879.8"/>
</dbReference>
<dbReference type="GeneID" id="81751"/>
<dbReference type="KEGG" id="rno:81751"/>
<dbReference type="AGR" id="RGD:621060"/>
<dbReference type="CTD" id="5664"/>
<dbReference type="RGD" id="621060">
    <property type="gene designation" value="Psen2"/>
</dbReference>
<dbReference type="eggNOG" id="KOG2736">
    <property type="taxonomic scope" value="Eukaryota"/>
</dbReference>
<dbReference type="GeneTree" id="ENSGT00940000157923"/>
<dbReference type="InParanoid" id="O88777"/>
<dbReference type="OMA" id="TTNLMMF"/>
<dbReference type="OrthoDB" id="20287at2759"/>
<dbReference type="PhylomeDB" id="O88777"/>
<dbReference type="TreeFam" id="TF315040"/>
<dbReference type="Reactome" id="R-RNO-1251985">
    <property type="pathway name" value="Nuclear signaling by ERBB4"/>
</dbReference>
<dbReference type="Reactome" id="R-RNO-193692">
    <property type="pathway name" value="Regulated proteolysis of p75NTR"/>
</dbReference>
<dbReference type="Reactome" id="R-RNO-205043">
    <property type="pathway name" value="NRIF signals cell death from the nucleus"/>
</dbReference>
<dbReference type="Reactome" id="R-RNO-3928665">
    <property type="pathway name" value="EPH-ephrin mediated repulsion of cells"/>
</dbReference>
<dbReference type="Reactome" id="R-RNO-9013507">
    <property type="pathway name" value="NOTCH3 Activation and Transmission of Signal to the Nucleus"/>
</dbReference>
<dbReference type="Reactome" id="R-RNO-9017802">
    <property type="pathway name" value="Noncanonical activation of NOTCH3"/>
</dbReference>
<dbReference type="Reactome" id="R-RNO-9839383">
    <property type="pathway name" value="TGFBR3 PTM regulation"/>
</dbReference>
<dbReference type="PRO" id="PR:O88777"/>
<dbReference type="Proteomes" id="UP000002494">
    <property type="component" value="Chromosome 13"/>
</dbReference>
<dbReference type="Bgee" id="ENSRNOG00000002879">
    <property type="expression patterns" value="Expressed in liver and 19 other cell types or tissues"/>
</dbReference>
<dbReference type="GO" id="GO:0005813">
    <property type="term" value="C:centrosome"/>
    <property type="evidence" value="ECO:0000266"/>
    <property type="project" value="RGD"/>
</dbReference>
<dbReference type="GO" id="GO:0036064">
    <property type="term" value="C:ciliary basal body"/>
    <property type="evidence" value="ECO:0000266"/>
    <property type="project" value="RGD"/>
</dbReference>
<dbReference type="GO" id="GO:0005829">
    <property type="term" value="C:cytosol"/>
    <property type="evidence" value="ECO:0000266"/>
    <property type="project" value="RGD"/>
</dbReference>
<dbReference type="GO" id="GO:0005769">
    <property type="term" value="C:early endosome"/>
    <property type="evidence" value="ECO:0000314"/>
    <property type="project" value="RGD"/>
</dbReference>
<dbReference type="GO" id="GO:0005783">
    <property type="term" value="C:endoplasmic reticulum"/>
    <property type="evidence" value="ECO:0000266"/>
    <property type="project" value="RGD"/>
</dbReference>
<dbReference type="GO" id="GO:0005789">
    <property type="term" value="C:endoplasmic reticulum membrane"/>
    <property type="evidence" value="ECO:0007669"/>
    <property type="project" value="UniProtKB-SubCell"/>
</dbReference>
<dbReference type="GO" id="GO:0070765">
    <property type="term" value="C:gamma-secretase complex"/>
    <property type="evidence" value="ECO:0000266"/>
    <property type="project" value="RGD"/>
</dbReference>
<dbReference type="GO" id="GO:0098978">
    <property type="term" value="C:glutamatergic synapse"/>
    <property type="evidence" value="ECO:0000266"/>
    <property type="project" value="RGD"/>
</dbReference>
<dbReference type="GO" id="GO:0005794">
    <property type="term" value="C:Golgi apparatus"/>
    <property type="evidence" value="ECO:0000266"/>
    <property type="project" value="RGD"/>
</dbReference>
<dbReference type="GO" id="GO:0000139">
    <property type="term" value="C:Golgi membrane"/>
    <property type="evidence" value="ECO:0007669"/>
    <property type="project" value="UniProtKB-SubCell"/>
</dbReference>
<dbReference type="GO" id="GO:0000776">
    <property type="term" value="C:kinetochore"/>
    <property type="evidence" value="ECO:0000266"/>
    <property type="project" value="RGD"/>
</dbReference>
<dbReference type="GO" id="GO:0016020">
    <property type="term" value="C:membrane"/>
    <property type="evidence" value="ECO:0000266"/>
    <property type="project" value="RGD"/>
</dbReference>
<dbReference type="GO" id="GO:0043025">
    <property type="term" value="C:neuronal cell body"/>
    <property type="evidence" value="ECO:0000266"/>
    <property type="project" value="RGD"/>
</dbReference>
<dbReference type="GO" id="GO:0005637">
    <property type="term" value="C:nuclear inner membrane"/>
    <property type="evidence" value="ECO:0000266"/>
    <property type="project" value="RGD"/>
</dbReference>
<dbReference type="GO" id="GO:0005886">
    <property type="term" value="C:plasma membrane"/>
    <property type="evidence" value="ECO:0000266"/>
    <property type="project" value="RGD"/>
</dbReference>
<dbReference type="GO" id="GO:0098794">
    <property type="term" value="C:postsynapse"/>
    <property type="evidence" value="ECO:0007669"/>
    <property type="project" value="GOC"/>
</dbReference>
<dbReference type="GO" id="GO:0042734">
    <property type="term" value="C:presynaptic membrane"/>
    <property type="evidence" value="ECO:0000314"/>
    <property type="project" value="SynGO"/>
</dbReference>
<dbReference type="GO" id="GO:0032991">
    <property type="term" value="C:protein-containing complex"/>
    <property type="evidence" value="ECO:0000266"/>
    <property type="project" value="RGD"/>
</dbReference>
<dbReference type="GO" id="GO:0097060">
    <property type="term" value="C:synaptic membrane"/>
    <property type="evidence" value="ECO:0000314"/>
    <property type="project" value="RGD"/>
</dbReference>
<dbReference type="GO" id="GO:0008021">
    <property type="term" value="C:synaptic vesicle"/>
    <property type="evidence" value="ECO:0000314"/>
    <property type="project" value="RGD"/>
</dbReference>
<dbReference type="GO" id="GO:0030018">
    <property type="term" value="C:Z disc"/>
    <property type="evidence" value="ECO:0000266"/>
    <property type="project" value="RGD"/>
</dbReference>
<dbReference type="GO" id="GO:0042500">
    <property type="term" value="F:aspartic endopeptidase activity, intramembrane cleaving"/>
    <property type="evidence" value="ECO:0000266"/>
    <property type="project" value="RGD"/>
</dbReference>
<dbReference type="GO" id="GO:0004175">
    <property type="term" value="F:endopeptidase activity"/>
    <property type="evidence" value="ECO:0000266"/>
    <property type="project" value="RGD"/>
</dbReference>
<dbReference type="GO" id="GO:0042987">
    <property type="term" value="P:amyloid precursor protein catabolic process"/>
    <property type="evidence" value="ECO:0000266"/>
    <property type="project" value="RGD"/>
</dbReference>
<dbReference type="GO" id="GO:0034205">
    <property type="term" value="P:amyloid-beta formation"/>
    <property type="evidence" value="ECO:0000266"/>
    <property type="project" value="RGD"/>
</dbReference>
<dbReference type="GO" id="GO:0050435">
    <property type="term" value="P:amyloid-beta metabolic process"/>
    <property type="evidence" value="ECO:0000266"/>
    <property type="project" value="RGD"/>
</dbReference>
<dbReference type="GO" id="GO:0097190">
    <property type="term" value="P:apoptotic signaling pathway"/>
    <property type="evidence" value="ECO:0000266"/>
    <property type="project" value="RGD"/>
</dbReference>
<dbReference type="GO" id="GO:0048854">
    <property type="term" value="P:brain morphogenesis"/>
    <property type="evidence" value="ECO:0000266"/>
    <property type="project" value="RGD"/>
</dbReference>
<dbReference type="GO" id="GO:0055074">
    <property type="term" value="P:calcium ion homeostasis"/>
    <property type="evidence" value="ECO:0000318"/>
    <property type="project" value="GO_Central"/>
</dbReference>
<dbReference type="GO" id="GO:0006816">
    <property type="term" value="P:calcium ion transport"/>
    <property type="evidence" value="ECO:0000266"/>
    <property type="project" value="RGD"/>
</dbReference>
<dbReference type="GO" id="GO:0060048">
    <property type="term" value="P:cardiac muscle contraction"/>
    <property type="evidence" value="ECO:0000266"/>
    <property type="project" value="RGD"/>
</dbReference>
<dbReference type="GO" id="GO:0001708">
    <property type="term" value="P:cell fate specification"/>
    <property type="evidence" value="ECO:0000266"/>
    <property type="project" value="RGD"/>
</dbReference>
<dbReference type="GO" id="GO:0021904">
    <property type="term" value="P:dorsal/ventral neural tube patterning"/>
    <property type="evidence" value="ECO:0000266"/>
    <property type="project" value="RGD"/>
</dbReference>
<dbReference type="GO" id="GO:0030326">
    <property type="term" value="P:embryonic limb morphogenesis"/>
    <property type="evidence" value="ECO:0000266"/>
    <property type="project" value="RGD"/>
</dbReference>
<dbReference type="GO" id="GO:0032469">
    <property type="term" value="P:endoplasmic reticulum calcium ion homeostasis"/>
    <property type="evidence" value="ECO:0000266"/>
    <property type="project" value="RGD"/>
</dbReference>
<dbReference type="GO" id="GO:0030900">
    <property type="term" value="P:forebrain development"/>
    <property type="evidence" value="ECO:0000266"/>
    <property type="project" value="RGD"/>
</dbReference>
<dbReference type="GO" id="GO:0001942">
    <property type="term" value="P:hair follicle development"/>
    <property type="evidence" value="ECO:0000266"/>
    <property type="project" value="RGD"/>
</dbReference>
<dbReference type="GO" id="GO:0002244">
    <property type="term" value="P:hematopoietic progenitor cell differentiation"/>
    <property type="evidence" value="ECO:0000266"/>
    <property type="project" value="RGD"/>
</dbReference>
<dbReference type="GO" id="GO:0035556">
    <property type="term" value="P:intracellular signal transduction"/>
    <property type="evidence" value="ECO:0007669"/>
    <property type="project" value="InterPro"/>
</dbReference>
<dbReference type="GO" id="GO:0007611">
    <property type="term" value="P:learning or memory"/>
    <property type="evidence" value="ECO:0000266"/>
    <property type="project" value="RGD"/>
</dbReference>
<dbReference type="GO" id="GO:0040011">
    <property type="term" value="P:locomotion"/>
    <property type="evidence" value="ECO:0000266"/>
    <property type="project" value="RGD"/>
</dbReference>
<dbReference type="GO" id="GO:0048286">
    <property type="term" value="P:lung alveolus development"/>
    <property type="evidence" value="ECO:0000266"/>
    <property type="project" value="RGD"/>
</dbReference>
<dbReference type="GO" id="GO:0006509">
    <property type="term" value="P:membrane protein ectodomain proteolysis"/>
    <property type="evidence" value="ECO:0000266"/>
    <property type="project" value="RGD"/>
</dbReference>
<dbReference type="GO" id="GO:0007613">
    <property type="term" value="P:memory"/>
    <property type="evidence" value="ECO:0000266"/>
    <property type="project" value="RGD"/>
</dbReference>
<dbReference type="GO" id="GO:1990456">
    <property type="term" value="P:mitochondrion-endoplasmic reticulum membrane tethering"/>
    <property type="evidence" value="ECO:0000266"/>
    <property type="project" value="RGD"/>
</dbReference>
<dbReference type="GO" id="GO:0002573">
    <property type="term" value="P:myeloid leukocyte differentiation"/>
    <property type="evidence" value="ECO:0000266"/>
    <property type="project" value="RGD"/>
</dbReference>
<dbReference type="GO" id="GO:2001234">
    <property type="term" value="P:negative regulation of apoptotic signaling pathway"/>
    <property type="evidence" value="ECO:0000266"/>
    <property type="project" value="RGD"/>
</dbReference>
<dbReference type="GO" id="GO:0000122">
    <property type="term" value="P:negative regulation of transcription by RNA polymerase II"/>
    <property type="evidence" value="ECO:0000266"/>
    <property type="project" value="RGD"/>
</dbReference>
<dbReference type="GO" id="GO:2000059">
    <property type="term" value="P:negative regulation of ubiquitin-dependent protein catabolic process"/>
    <property type="evidence" value="ECO:0000266"/>
    <property type="project" value="RGD"/>
</dbReference>
<dbReference type="GO" id="GO:0150076">
    <property type="term" value="P:neuroinflammatory response"/>
    <property type="evidence" value="ECO:0000266"/>
    <property type="project" value="RGD"/>
</dbReference>
<dbReference type="GO" id="GO:0070050">
    <property type="term" value="P:neuron cellular homeostasis"/>
    <property type="evidence" value="ECO:0000266"/>
    <property type="project" value="RGD"/>
</dbReference>
<dbReference type="GO" id="GO:0007219">
    <property type="term" value="P:Notch signaling pathway"/>
    <property type="evidence" value="ECO:0000266"/>
    <property type="project" value="RGD"/>
</dbReference>
<dbReference type="GO" id="GO:0043065">
    <property type="term" value="P:positive regulation of apoptotic process"/>
    <property type="evidence" value="ECO:0000266"/>
    <property type="project" value="RGD"/>
</dbReference>
<dbReference type="GO" id="GO:0050820">
    <property type="term" value="P:positive regulation of coagulation"/>
    <property type="evidence" value="ECO:0000266"/>
    <property type="project" value="RGD"/>
</dbReference>
<dbReference type="GO" id="GO:1902043">
    <property type="term" value="P:positive regulation of extrinsic apoptotic signaling pathway via death domain receptors"/>
    <property type="evidence" value="ECO:0000266"/>
    <property type="project" value="RGD"/>
</dbReference>
<dbReference type="GO" id="GO:0032436">
    <property type="term" value="P:positive regulation of proteasomal ubiquitin-dependent protein catabolic process"/>
    <property type="evidence" value="ECO:0000266"/>
    <property type="project" value="RGD"/>
</dbReference>
<dbReference type="GO" id="GO:0001921">
    <property type="term" value="P:positive regulation of receptor recycling"/>
    <property type="evidence" value="ECO:0000266"/>
    <property type="project" value="RGD"/>
</dbReference>
<dbReference type="GO" id="GO:0140249">
    <property type="term" value="P:protein catabolic process at postsynapse"/>
    <property type="evidence" value="ECO:0000266"/>
    <property type="project" value="RGD"/>
</dbReference>
<dbReference type="GO" id="GO:0051604">
    <property type="term" value="P:protein maturation"/>
    <property type="evidence" value="ECO:0000266"/>
    <property type="project" value="RGD"/>
</dbReference>
<dbReference type="GO" id="GO:0016485">
    <property type="term" value="P:protein processing"/>
    <property type="evidence" value="ECO:0000266"/>
    <property type="project" value="RGD"/>
</dbReference>
<dbReference type="GO" id="GO:0015031">
    <property type="term" value="P:protein transport"/>
    <property type="evidence" value="ECO:0000266"/>
    <property type="project" value="RGD"/>
</dbReference>
<dbReference type="GO" id="GO:0110097">
    <property type="term" value="P:regulation of calcium import into the mitochondrion"/>
    <property type="evidence" value="ECO:0000266"/>
    <property type="project" value="RGD"/>
</dbReference>
<dbReference type="GO" id="GO:0099175">
    <property type="term" value="P:regulation of postsynapse organization"/>
    <property type="evidence" value="ECO:0000266"/>
    <property type="project" value="RGD"/>
</dbReference>
<dbReference type="GO" id="GO:0048167">
    <property type="term" value="P:regulation of synaptic plasticity"/>
    <property type="evidence" value="ECO:0000266"/>
    <property type="project" value="RGD"/>
</dbReference>
<dbReference type="GO" id="GO:0001666">
    <property type="term" value="P:response to hypoxia"/>
    <property type="evidence" value="ECO:0000270"/>
    <property type="project" value="RGD"/>
</dbReference>
<dbReference type="GO" id="GO:0043589">
    <property type="term" value="P:skin morphogenesis"/>
    <property type="evidence" value="ECO:0000266"/>
    <property type="project" value="RGD"/>
</dbReference>
<dbReference type="GO" id="GO:0001756">
    <property type="term" value="P:somitogenesis"/>
    <property type="evidence" value="ECO:0000266"/>
    <property type="project" value="RGD"/>
</dbReference>
<dbReference type="GO" id="GO:0002286">
    <property type="term" value="P:T cell activation involved in immune response"/>
    <property type="evidence" value="ECO:0000266"/>
    <property type="project" value="RGD"/>
</dbReference>
<dbReference type="GO" id="GO:0050852">
    <property type="term" value="P:T cell receptor signaling pathway"/>
    <property type="evidence" value="ECO:0000266"/>
    <property type="project" value="RGD"/>
</dbReference>
<dbReference type="GO" id="GO:0048538">
    <property type="term" value="P:thymus development"/>
    <property type="evidence" value="ECO:0000266"/>
    <property type="project" value="RGD"/>
</dbReference>
<dbReference type="FunFam" id="1.10.472.100:FF:000001">
    <property type="entry name" value="Presenilin"/>
    <property type="match status" value="1"/>
</dbReference>
<dbReference type="Gene3D" id="1.10.472.100">
    <property type="entry name" value="Presenilin"/>
    <property type="match status" value="1"/>
</dbReference>
<dbReference type="InterPro" id="IPR001493">
    <property type="entry name" value="Pept_A22A_PS2"/>
</dbReference>
<dbReference type="InterPro" id="IPR001108">
    <property type="entry name" value="Peptidase_A22A"/>
</dbReference>
<dbReference type="InterPro" id="IPR006639">
    <property type="entry name" value="Preselin/SPP"/>
</dbReference>
<dbReference type="InterPro" id="IPR042524">
    <property type="entry name" value="Presenilin_C"/>
</dbReference>
<dbReference type="PANTHER" id="PTHR10202">
    <property type="entry name" value="PRESENILIN"/>
    <property type="match status" value="1"/>
</dbReference>
<dbReference type="PANTHER" id="PTHR10202:SF24">
    <property type="entry name" value="PRESENILIN-2"/>
    <property type="match status" value="1"/>
</dbReference>
<dbReference type="Pfam" id="PF01080">
    <property type="entry name" value="Presenilin"/>
    <property type="match status" value="2"/>
</dbReference>
<dbReference type="PRINTS" id="PR01072">
    <property type="entry name" value="PRESENILIN"/>
</dbReference>
<dbReference type="PRINTS" id="PR01074">
    <property type="entry name" value="PRESENILIN2"/>
</dbReference>
<dbReference type="SMART" id="SM00730">
    <property type="entry name" value="PSN"/>
    <property type="match status" value="1"/>
</dbReference>
<keyword id="KW-0256">Endoplasmic reticulum</keyword>
<keyword id="KW-0333">Golgi apparatus</keyword>
<keyword id="KW-0378">Hydrolase</keyword>
<keyword id="KW-0472">Membrane</keyword>
<keyword id="KW-0914">Notch signaling pathway</keyword>
<keyword id="KW-0597">Phosphoprotein</keyword>
<keyword id="KW-0645">Protease</keyword>
<keyword id="KW-1185">Reference proteome</keyword>
<keyword id="KW-0812">Transmembrane</keyword>
<keyword id="KW-1133">Transmembrane helix</keyword>
<protein>
    <recommendedName>
        <fullName>Presenilin-2</fullName>
        <shortName>PS-2</shortName>
        <ecNumber>3.4.23.-</ecNumber>
    </recommendedName>
    <component>
        <recommendedName>
            <fullName>Presenilin-2 NTF subunit</fullName>
        </recommendedName>
    </component>
    <component>
        <recommendedName>
            <fullName>Presenilin-2 CTF subunit</fullName>
        </recommendedName>
    </component>
</protein>
<sequence length="448" mass="50051">MLTFMASDSEEEVCDERTSLMSAESPTSRSCQDSRPGPEDGENTAQWRSQENEDDCEEDPDHYACSGVPGRPSGLEEELTLKYGAKHVIMLFVPVTLCMIVVVATIKSVRFYTEKNGQLIYTPFTEDTPSVGQRLLNSVLNTLIMISVIVVMTIFLVVLYKYRCYKFIHGWLIMSSLMLLFLFTYIYLGEVFKTYNVAMDYPTLFLAVWNFGAVGMVCIHWKGPLVLQQAYLIVISALMALVFIKYLPEWSAWVILGAISVYDLVAVLCPKGPLRMLVETAQERNEPIFPALIYSSAMVWTVGMAKLDPSSQGALQLPYDPEMEEDSYDSFGEPSYPEAFEAPQPGYPGEEPEEEEERGVKLGLGDFIFYSVLVGKAAATGNGDWSTTLACFIAILIGLCLTLLLLAVFKKALPALPISITFGLIFYFSTDNLVRPFMDTLASHQLYI</sequence>
<comment type="function">
    <text evidence="2 6">Probable catalytic subunit of the gamma-secretase complex, an endoprotease complex that catalyzes the intramembrane cleavage of integral membrane proteins such as Notch receptors and APP (amyloid-beta precursor protein). Requires the other members of the gamma-secretase complex to have a protease activity. May play a role in intracellular signaling and gene expression or in linking chromatin to the nuclear membrane. May function in the cytoplasmic partitioning of proteins. The holoprotein functions as a calcium-leak channel that allows the passive movement of calcium from endoplasmic reticulum to cytosol and is involved in calcium homeostasis (By similarity). Is a regulator of mitochondrion-endoplasmic reticulum membrane tethering and modulates calcium ions shuttling between ER and mitochondria (PubMed:21285369).</text>
</comment>
<comment type="subunit">
    <text evidence="1">Homodimer. Component of the gamma-secretase complex, a complex composed of a presenilin homodimer (PSEN1 or PSEN2), nicastrin (NCSTN), APH1 (APH1A or APH1B) and PEN2. Such minimal complex is sufficient for secretase activity, although other components may exist. Interacts with DOCK3. Interacts with HERPUD1, FLNA and FLNB (By similarity).</text>
</comment>
<comment type="subcellular location">
    <subcellularLocation>
        <location evidence="1">Endoplasmic reticulum membrane</location>
        <topology evidence="1">Multi-pass membrane protein</topology>
    </subcellularLocation>
    <subcellularLocation>
        <location evidence="1">Golgi apparatus membrane</location>
        <topology evidence="1">Multi-pass membrane protein</topology>
    </subcellularLocation>
</comment>
<comment type="domain">
    <text evidence="1">The PAL motif is required for normal active site conformation.</text>
</comment>
<comment type="PTM">
    <text evidence="1">Phosphorylated on serine residues.</text>
</comment>
<comment type="similarity">
    <text evidence="7">Belongs to the peptidase A22A family.</text>
</comment>
<reference key="1">
    <citation type="submission" date="1996-07" db="EMBL/GenBank/DDBJ databases">
        <authorList>
            <person name="Frentzel S."/>
            <person name="Abdel A.S."/>
            <person name="Luebbert H."/>
        </authorList>
    </citation>
    <scope>NUCLEOTIDE SEQUENCE [MRNA]</scope>
    <source>
        <strain>Wistar</strain>
        <tissue>Brain</tissue>
    </source>
</reference>
<reference key="2">
    <citation type="journal article" date="1997" name="Gene">
        <title>Cloning of cDNA and expression of the gene encoding rat presenilin-2.</title>
        <authorList>
            <person name="Takahashi H."/>
            <person name="Mercken M."/>
            <person name="Nakazato Y."/>
            <person name="Noguchi K."/>
            <person name="Murayama M."/>
            <person name="Imahori K."/>
            <person name="Takashima A."/>
        </authorList>
    </citation>
    <scope>NUCLEOTIDE SEQUENCE [MRNA]</scope>
    <source>
        <strain>Wistar</strain>
        <tissue>Brain</tissue>
    </source>
</reference>
<reference key="3">
    <citation type="journal article" date="1998" name="Biochim. Biophys. Acta">
        <title>Cloning of the cDNA encoding rat presenilin-2.</title>
        <authorList>
            <person name="Tanahashi H."/>
            <person name="Tabira T."/>
        </authorList>
    </citation>
    <scope>NUCLEOTIDE SEQUENCE [MRNA]</scope>
    <source>
        <strain>Wistar</strain>
        <tissue>Brain</tissue>
    </source>
</reference>
<reference key="4">
    <citation type="journal article" date="2004" name="Genome Res.">
        <title>The status, quality, and expansion of the NIH full-length cDNA project: the Mammalian Gene Collection (MGC).</title>
        <authorList>
            <consortium name="The MGC Project Team"/>
        </authorList>
    </citation>
    <scope>NUCLEOTIDE SEQUENCE [LARGE SCALE MRNA]</scope>
    <source>
        <tissue>Kidney</tissue>
    </source>
</reference>
<reference key="5">
    <citation type="journal article" date="2011" name="Proc. Natl. Acad. Sci. U.S.A.">
        <title>Presenilin 2 modulates endoplasmic reticulum (ER)-mitochondria interactions and Ca2+ cross-talk.</title>
        <authorList>
            <person name="Zampese E."/>
            <person name="Fasolato C."/>
            <person name="Kipanyula M.J."/>
            <person name="Bortolozzi M."/>
            <person name="Pozzan T."/>
            <person name="Pizzo P."/>
        </authorList>
    </citation>
    <scope>FUNCTION</scope>
</reference>
<reference key="6">
    <citation type="journal article" date="2012" name="Nat. Commun.">
        <title>Quantitative maps of protein phosphorylation sites across 14 different rat organs and tissues.</title>
        <authorList>
            <person name="Lundby A."/>
            <person name="Secher A."/>
            <person name="Lage K."/>
            <person name="Nordsborg N.B."/>
            <person name="Dmytriyev A."/>
            <person name="Lundby C."/>
            <person name="Olsen J.V."/>
        </authorList>
    </citation>
    <scope>IDENTIFICATION BY MASS SPECTROMETRY [LARGE SCALE ANALYSIS]</scope>
</reference>
<name>PSN2_RAT</name>
<feature type="chain" id="PRO_0000025609" description="Presenilin-2 NTF subunit" evidence="1">
    <location>
        <begin position="1"/>
        <end position="297"/>
    </location>
</feature>
<feature type="chain" id="PRO_0000025610" description="Presenilin-2 CTF subunit" evidence="1">
    <location>
        <begin position="298"/>
        <end position="448"/>
    </location>
</feature>
<feature type="topological domain" description="Cytoplasmic" evidence="4">
    <location>
        <begin position="1"/>
        <end position="87"/>
    </location>
</feature>
<feature type="transmembrane region" description="Helical" evidence="4">
    <location>
        <begin position="88"/>
        <end position="106"/>
    </location>
</feature>
<feature type="topological domain" description="Lumenal" evidence="4">
    <location>
        <begin position="107"/>
        <end position="138"/>
    </location>
</feature>
<feature type="transmembrane region" description="Helical" evidence="4">
    <location>
        <begin position="139"/>
        <end position="159"/>
    </location>
</feature>
<feature type="topological domain" description="Cytoplasmic" evidence="4">
    <location>
        <begin position="160"/>
        <end position="166"/>
    </location>
</feature>
<feature type="transmembrane region" description="Helical" evidence="4">
    <location>
        <begin position="167"/>
        <end position="187"/>
    </location>
</feature>
<feature type="topological domain" description="Lumenal" evidence="4">
    <location>
        <begin position="188"/>
        <end position="200"/>
    </location>
</feature>
<feature type="transmembrane region" description="Helical" evidence="4">
    <location>
        <begin position="201"/>
        <end position="221"/>
    </location>
</feature>
<feature type="topological domain" description="Cytoplasmic" evidence="4">
    <location>
        <begin position="222"/>
        <end position="223"/>
    </location>
</feature>
<feature type="transmembrane region" description="Helical" evidence="4">
    <location>
        <begin position="224"/>
        <end position="244"/>
    </location>
</feature>
<feature type="topological domain" description="Lumenal" evidence="4">
    <location>
        <begin position="245"/>
        <end position="249"/>
    </location>
</feature>
<feature type="transmembrane region" description="Helical" evidence="4">
    <location>
        <begin position="250"/>
        <end position="270"/>
    </location>
</feature>
<feature type="topological domain" description="Cytoplasmic" evidence="4">
    <location>
        <begin position="271"/>
        <end position="358"/>
    </location>
</feature>
<feature type="transmembrane region" description="Helical" evidence="4">
    <location>
        <begin position="359"/>
        <end position="379"/>
    </location>
</feature>
<feature type="topological domain" description="Lumenal" evidence="4">
    <location>
        <begin position="380"/>
        <end position="388"/>
    </location>
</feature>
<feature type="transmembrane region" description="Helical" evidence="4">
    <location>
        <begin position="389"/>
        <end position="409"/>
    </location>
</feature>
<feature type="topological domain" description="Cytoplasmic" evidence="4">
    <location>
        <begin position="410"/>
        <end position="413"/>
    </location>
</feature>
<feature type="intramembrane region" description="Helical" evidence="4">
    <location>
        <begin position="414"/>
        <end position="434"/>
    </location>
</feature>
<feature type="topological domain" description="Cytoplasmic" evidence="4">
    <location>
        <begin position="435"/>
        <end position="448"/>
    </location>
</feature>
<feature type="region of interest" description="Disordered" evidence="5">
    <location>
        <begin position="1"/>
        <end position="62"/>
    </location>
</feature>
<feature type="short sequence motif" description="PAL">
    <location>
        <begin position="414"/>
        <end position="416"/>
    </location>
</feature>
<feature type="compositionally biased region" description="Polar residues" evidence="5">
    <location>
        <begin position="19"/>
        <end position="33"/>
    </location>
</feature>
<feature type="active site" evidence="1">
    <location>
        <position position="263"/>
    </location>
</feature>
<feature type="active site" evidence="1">
    <location>
        <position position="366"/>
    </location>
</feature>
<feature type="modified residue" description="Phosphoserine" evidence="2">
    <location>
        <position position="22"/>
    </location>
</feature>
<feature type="modified residue" description="Phosphoserine" evidence="2">
    <location>
        <position position="25"/>
    </location>
</feature>
<feature type="modified residue" description="Phosphoserine" evidence="3">
    <location>
        <position position="30"/>
    </location>
</feature>
<feature type="sequence conflict" description="In Ref. 1; CAA67663." evidence="7" ref="1">
    <original>S</original>
    <variation>T</variation>
    <location>
        <position position="7"/>
    </location>
</feature>
<feature type="sequence conflict" description="In Ref. 3; BAA20406." evidence="7" ref="3">
    <original>KH</original>
    <variation>ND</variation>
    <location>
        <begin position="86"/>
        <end position="87"/>
    </location>
</feature>
<proteinExistence type="evidence at protein level"/>
<evidence type="ECO:0000250" key="1"/>
<evidence type="ECO:0000250" key="2">
    <source>
        <dbReference type="UniProtKB" id="P49810"/>
    </source>
</evidence>
<evidence type="ECO:0000250" key="3">
    <source>
        <dbReference type="UniProtKB" id="Q61144"/>
    </source>
</evidence>
<evidence type="ECO:0000255" key="4"/>
<evidence type="ECO:0000256" key="5">
    <source>
        <dbReference type="SAM" id="MobiDB-lite"/>
    </source>
</evidence>
<evidence type="ECO:0000269" key="6">
    <source>
    </source>
</evidence>
<evidence type="ECO:0000305" key="7"/>
<accession>O88777</accession>
<accession>O08947</accession>
<accession>O35546</accession>
<gene>
    <name type="primary">Psen2</name>
    <name type="synonym">Ps2</name>
    <name type="synonym">Psnl2</name>
</gene>
<organism>
    <name type="scientific">Rattus norvegicus</name>
    <name type="common">Rat</name>
    <dbReference type="NCBI Taxonomy" id="10116"/>
    <lineage>
        <taxon>Eukaryota</taxon>
        <taxon>Metazoa</taxon>
        <taxon>Chordata</taxon>
        <taxon>Craniata</taxon>
        <taxon>Vertebrata</taxon>
        <taxon>Euteleostomi</taxon>
        <taxon>Mammalia</taxon>
        <taxon>Eutheria</taxon>
        <taxon>Euarchontoglires</taxon>
        <taxon>Glires</taxon>
        <taxon>Rodentia</taxon>
        <taxon>Myomorpha</taxon>
        <taxon>Muroidea</taxon>
        <taxon>Muridae</taxon>
        <taxon>Murinae</taxon>
        <taxon>Rattus</taxon>
    </lineage>
</organism>